<reference key="1">
    <citation type="journal article" date="2001" name="Nature">
        <title>Complete genome sequence of a multiple drug resistant Salmonella enterica serovar Typhi CT18.</title>
        <authorList>
            <person name="Parkhill J."/>
            <person name="Dougan G."/>
            <person name="James K.D."/>
            <person name="Thomson N.R."/>
            <person name="Pickard D."/>
            <person name="Wain J."/>
            <person name="Churcher C.M."/>
            <person name="Mungall K.L."/>
            <person name="Bentley S.D."/>
            <person name="Holden M.T.G."/>
            <person name="Sebaihia M."/>
            <person name="Baker S."/>
            <person name="Basham D."/>
            <person name="Brooks K."/>
            <person name="Chillingworth T."/>
            <person name="Connerton P."/>
            <person name="Cronin A."/>
            <person name="Davis P."/>
            <person name="Davies R.M."/>
            <person name="Dowd L."/>
            <person name="White N."/>
            <person name="Farrar J."/>
            <person name="Feltwell T."/>
            <person name="Hamlin N."/>
            <person name="Haque A."/>
            <person name="Hien T.T."/>
            <person name="Holroyd S."/>
            <person name="Jagels K."/>
            <person name="Krogh A."/>
            <person name="Larsen T.S."/>
            <person name="Leather S."/>
            <person name="Moule S."/>
            <person name="O'Gaora P."/>
            <person name="Parry C."/>
            <person name="Quail M.A."/>
            <person name="Rutherford K.M."/>
            <person name="Simmonds M."/>
            <person name="Skelton J."/>
            <person name="Stevens K."/>
            <person name="Whitehead S."/>
            <person name="Barrell B.G."/>
        </authorList>
    </citation>
    <scope>NUCLEOTIDE SEQUENCE [LARGE SCALE GENOMIC DNA]</scope>
    <source>
        <strain>CT18</strain>
    </source>
</reference>
<reference key="2">
    <citation type="journal article" date="2003" name="J. Bacteriol.">
        <title>Comparative genomics of Salmonella enterica serovar Typhi strains Ty2 and CT18.</title>
        <authorList>
            <person name="Deng W."/>
            <person name="Liou S.-R."/>
            <person name="Plunkett G. III"/>
            <person name="Mayhew G.F."/>
            <person name="Rose D.J."/>
            <person name="Burland V."/>
            <person name="Kodoyianni V."/>
            <person name="Schwartz D.C."/>
            <person name="Blattner F.R."/>
        </authorList>
    </citation>
    <scope>NUCLEOTIDE SEQUENCE [LARGE SCALE GENOMIC DNA]</scope>
    <source>
        <strain>ATCC 700931 / Ty2</strain>
    </source>
</reference>
<evidence type="ECO:0000255" key="1">
    <source>
        <dbReference type="HAMAP-Rule" id="MF_00963"/>
    </source>
</evidence>
<evidence type="ECO:0000256" key="2">
    <source>
        <dbReference type="SAM" id="MobiDB-lite"/>
    </source>
</evidence>
<evidence type="ECO:0000305" key="3"/>
<accession>P0A2E4</accession>
<accession>P07336</accession>
<accession>Q8Z3M4</accession>
<keyword id="KW-0963">Cytoplasm</keyword>
<keyword id="KW-0238">DNA-binding</keyword>
<keyword id="KW-0731">Sigma factor</keyword>
<keyword id="KW-0804">Transcription</keyword>
<keyword id="KW-0805">Transcription regulation</keyword>
<sequence>MEQNPQSQLKLLVTRGKEQGYLTYAEVNDHLPEDIVDSDQIEDIIQMINDMGIQVMEEAPDADDLLLAENTTSTDEDAEEAAAQVLSSVESEIGRTTDPVRMYMREMGTVELLTREGEIDIAKRIEDGINQVQCSVAEYPEAITYLLEQYDRVEAEEARLSDLITGFVDPNAEEEMAPTATHVGSELSQEDLDDDEDEDEEDGDDDAADDDNSIDPELAREKFAELRAQYVVTRDTIKAKGRSHAAAQEEILKLSEVFKQFRLVPKQFDYLVNSMRVMMDRVRTQERLIMKLCVEQCKMPKKNFITLFTGNETSETWFNAAIAMNKPWSEKLHDVAEEVQRCLQKLRQIEEETGLTIEQVKDINRRMSIGEAKARRAKKEMVEANLRLVISIAKKYTNRGLQFLDLIQEGNIGLMKAVDKFEYRRGYKFSTYATWWIRQAITRSIADQARTIRIPVHMIETINKLNRISRQMLQEMGREPTPEELAERMLMPEDKIRKVLKIAKEPISMETPIGDDEDSHLGDFIEDTTLELPLDSATTESLRAATHDVLAGLTAREAKVLRMRFGIDMNTDHTLEEVGKQFDVTRERIRQIEAKALRKLRHPSRSEVLRSFLDD</sequence>
<organism>
    <name type="scientific">Salmonella typhi</name>
    <dbReference type="NCBI Taxonomy" id="90370"/>
    <lineage>
        <taxon>Bacteria</taxon>
        <taxon>Pseudomonadati</taxon>
        <taxon>Pseudomonadota</taxon>
        <taxon>Gammaproteobacteria</taxon>
        <taxon>Enterobacterales</taxon>
        <taxon>Enterobacteriaceae</taxon>
        <taxon>Salmonella</taxon>
    </lineage>
</organism>
<feature type="chain" id="PRO_0000093886" description="RNA polymerase sigma factor RpoD">
    <location>
        <begin position="1"/>
        <end position="615"/>
    </location>
</feature>
<feature type="DNA-binding region" description="H-T-H motif" evidence="1">
    <location>
        <begin position="575"/>
        <end position="594"/>
    </location>
</feature>
<feature type="region of interest" description="Disordered" evidence="2">
    <location>
        <begin position="177"/>
        <end position="215"/>
    </location>
</feature>
<feature type="region of interest" description="Sigma-70 factor domain-2" evidence="1">
    <location>
        <begin position="381"/>
        <end position="451"/>
    </location>
</feature>
<feature type="region of interest" description="Sigma-70 factor domain-3" evidence="1">
    <location>
        <begin position="460"/>
        <end position="536"/>
    </location>
</feature>
<feature type="region of interest" description="Sigma-70 factor domain-4" evidence="1">
    <location>
        <begin position="549"/>
        <end position="602"/>
    </location>
</feature>
<feature type="short sequence motif" description="Interaction with polymerase core subunit RpoC">
    <location>
        <begin position="405"/>
        <end position="408"/>
    </location>
</feature>
<feature type="compositionally biased region" description="Acidic residues" evidence="2">
    <location>
        <begin position="188"/>
        <end position="214"/>
    </location>
</feature>
<comment type="function">
    <text evidence="1">Sigma factors are initiation factors that promote the attachment of RNA polymerase to specific initiation sites and are then released. This sigma factor is the primary sigma factor during exponential growth.</text>
</comment>
<comment type="subunit">
    <text evidence="1">Interacts transiently with the RNA polymerase catalytic core.</text>
</comment>
<comment type="subcellular location">
    <subcellularLocation>
        <location evidence="1">Cytoplasm</location>
    </subcellularLocation>
</comment>
<comment type="similarity">
    <text evidence="1">Belongs to the sigma-70 factor family. RpoD/SigA subfamily.</text>
</comment>
<comment type="sequence caution" evidence="3">
    <conflict type="erroneous initiation">
        <sequence resource="EMBL-CDS" id="AAO70674"/>
    </conflict>
</comment>
<comment type="sequence caution" evidence="3">
    <conflict type="erroneous initiation">
        <sequence resource="EMBL-CDS" id="CAD07736"/>
    </conflict>
</comment>
<name>RPOD_SALTI</name>
<proteinExistence type="inferred from homology"/>
<protein>
    <recommendedName>
        <fullName evidence="1">RNA polymerase sigma factor RpoD</fullName>
    </recommendedName>
    <alternativeName>
        <fullName evidence="1">Sigma-70</fullName>
    </alternativeName>
</protein>
<gene>
    <name evidence="1" type="primary">rpoD</name>
    <name type="ordered locus">STY3390</name>
    <name type="ordered locus">t3131</name>
</gene>
<dbReference type="EMBL" id="AL513382">
    <property type="protein sequence ID" value="CAD07736.1"/>
    <property type="status" value="ALT_INIT"/>
    <property type="molecule type" value="Genomic_DNA"/>
</dbReference>
<dbReference type="EMBL" id="AE014613">
    <property type="protein sequence ID" value="AAO70674.1"/>
    <property type="status" value="ALT_INIT"/>
    <property type="molecule type" value="Genomic_DNA"/>
</dbReference>
<dbReference type="RefSeq" id="NP_457602.1">
    <property type="nucleotide sequence ID" value="NC_003198.1"/>
</dbReference>
<dbReference type="RefSeq" id="WP_001519776.1">
    <property type="nucleotide sequence ID" value="NZ_OU943338.1"/>
</dbReference>
<dbReference type="BMRB" id="P0A2E4"/>
<dbReference type="SMR" id="P0A2E4"/>
<dbReference type="STRING" id="220341.gene:17587245"/>
<dbReference type="KEGG" id="stt:t3131"/>
<dbReference type="KEGG" id="sty:STY3390"/>
<dbReference type="PATRIC" id="fig|220341.7.peg.3451"/>
<dbReference type="eggNOG" id="COG0568">
    <property type="taxonomic scope" value="Bacteria"/>
</dbReference>
<dbReference type="HOGENOM" id="CLU_014793_7_0_6"/>
<dbReference type="OMA" id="AICSVPY"/>
<dbReference type="OrthoDB" id="9809557at2"/>
<dbReference type="Proteomes" id="UP000000541">
    <property type="component" value="Chromosome"/>
</dbReference>
<dbReference type="Proteomes" id="UP000002670">
    <property type="component" value="Chromosome"/>
</dbReference>
<dbReference type="GO" id="GO:0005737">
    <property type="term" value="C:cytoplasm"/>
    <property type="evidence" value="ECO:0007669"/>
    <property type="project" value="UniProtKB-SubCell"/>
</dbReference>
<dbReference type="GO" id="GO:0003677">
    <property type="term" value="F:DNA binding"/>
    <property type="evidence" value="ECO:0007669"/>
    <property type="project" value="UniProtKB-UniRule"/>
</dbReference>
<dbReference type="GO" id="GO:0016987">
    <property type="term" value="F:sigma factor activity"/>
    <property type="evidence" value="ECO:0007669"/>
    <property type="project" value="UniProtKB-UniRule"/>
</dbReference>
<dbReference type="GO" id="GO:0006352">
    <property type="term" value="P:DNA-templated transcription initiation"/>
    <property type="evidence" value="ECO:0007669"/>
    <property type="project" value="UniProtKB-UniRule"/>
</dbReference>
<dbReference type="CDD" id="cd06171">
    <property type="entry name" value="Sigma70_r4"/>
    <property type="match status" value="1"/>
</dbReference>
<dbReference type="FunFam" id="1.10.220.120:FF:000001">
    <property type="entry name" value="RNA polymerase sigma factor RpoD"/>
    <property type="match status" value="1"/>
</dbReference>
<dbReference type="FunFam" id="1.10.601.10:FF:000002">
    <property type="entry name" value="RNA polymerase sigma factor RpoD"/>
    <property type="match status" value="1"/>
</dbReference>
<dbReference type="FunFam" id="1.10.10.10:FF:000002">
    <property type="entry name" value="RNA polymerase sigma factor SigA"/>
    <property type="match status" value="1"/>
</dbReference>
<dbReference type="FunFam" id="1.10.10.10:FF:000004">
    <property type="entry name" value="RNA polymerase sigma factor SigA"/>
    <property type="match status" value="1"/>
</dbReference>
<dbReference type="Gene3D" id="1.10.601.10">
    <property type="entry name" value="RNA Polymerase Primary Sigma Factor"/>
    <property type="match status" value="1"/>
</dbReference>
<dbReference type="Gene3D" id="1.10.220.120">
    <property type="entry name" value="Sigma-70 factor, region 1.1"/>
    <property type="match status" value="1"/>
</dbReference>
<dbReference type="Gene3D" id="1.10.10.10">
    <property type="entry name" value="Winged helix-like DNA-binding domain superfamily/Winged helix DNA-binding domain"/>
    <property type="match status" value="2"/>
</dbReference>
<dbReference type="HAMAP" id="MF_00963">
    <property type="entry name" value="Sigma70_RpoD_SigA"/>
    <property type="match status" value="1"/>
</dbReference>
<dbReference type="InterPro" id="IPR014284">
    <property type="entry name" value="RNA_pol_sigma-70_dom"/>
</dbReference>
<dbReference type="InterPro" id="IPR000943">
    <property type="entry name" value="RNA_pol_sigma70"/>
</dbReference>
<dbReference type="InterPro" id="IPR009042">
    <property type="entry name" value="RNA_pol_sigma70_r1_2"/>
</dbReference>
<dbReference type="InterPro" id="IPR007627">
    <property type="entry name" value="RNA_pol_sigma70_r2"/>
</dbReference>
<dbReference type="InterPro" id="IPR007624">
    <property type="entry name" value="RNA_pol_sigma70_r3"/>
</dbReference>
<dbReference type="InterPro" id="IPR007630">
    <property type="entry name" value="RNA_pol_sigma70_r4"/>
</dbReference>
<dbReference type="InterPro" id="IPR007631">
    <property type="entry name" value="RNA_pol_sigma_70_non-ess"/>
</dbReference>
<dbReference type="InterPro" id="IPR007127">
    <property type="entry name" value="RNA_pol_sigma_70_r1_1"/>
</dbReference>
<dbReference type="InterPro" id="IPR042189">
    <property type="entry name" value="RNA_pol_sigma_70_r1_1_sf"/>
</dbReference>
<dbReference type="InterPro" id="IPR013325">
    <property type="entry name" value="RNA_pol_sigma_r2"/>
</dbReference>
<dbReference type="InterPro" id="IPR013324">
    <property type="entry name" value="RNA_pol_sigma_r3/r4-like"/>
</dbReference>
<dbReference type="InterPro" id="IPR012760">
    <property type="entry name" value="RNA_pol_sigma_RpoD_C"/>
</dbReference>
<dbReference type="InterPro" id="IPR050239">
    <property type="entry name" value="Sigma-70_RNA_pol_init_factors"/>
</dbReference>
<dbReference type="InterPro" id="IPR028630">
    <property type="entry name" value="Sigma70_RpoD"/>
</dbReference>
<dbReference type="InterPro" id="IPR036388">
    <property type="entry name" value="WH-like_DNA-bd_sf"/>
</dbReference>
<dbReference type="NCBIfam" id="NF004208">
    <property type="entry name" value="PRK05658.1"/>
    <property type="match status" value="1"/>
</dbReference>
<dbReference type="NCBIfam" id="TIGR02393">
    <property type="entry name" value="RpoD_Cterm"/>
    <property type="match status" value="1"/>
</dbReference>
<dbReference type="NCBIfam" id="TIGR02937">
    <property type="entry name" value="sigma70-ECF"/>
    <property type="match status" value="1"/>
</dbReference>
<dbReference type="PANTHER" id="PTHR30603">
    <property type="entry name" value="RNA POLYMERASE SIGMA FACTOR RPO"/>
    <property type="match status" value="1"/>
</dbReference>
<dbReference type="PANTHER" id="PTHR30603:SF60">
    <property type="entry name" value="RNA POLYMERASE SIGMA FACTOR RPOD"/>
    <property type="match status" value="1"/>
</dbReference>
<dbReference type="Pfam" id="PF04546">
    <property type="entry name" value="Sigma70_ner"/>
    <property type="match status" value="1"/>
</dbReference>
<dbReference type="Pfam" id="PF03979">
    <property type="entry name" value="Sigma70_r1_1"/>
    <property type="match status" value="1"/>
</dbReference>
<dbReference type="Pfam" id="PF00140">
    <property type="entry name" value="Sigma70_r1_2"/>
    <property type="match status" value="1"/>
</dbReference>
<dbReference type="Pfam" id="PF04542">
    <property type="entry name" value="Sigma70_r2"/>
    <property type="match status" value="1"/>
</dbReference>
<dbReference type="Pfam" id="PF04539">
    <property type="entry name" value="Sigma70_r3"/>
    <property type="match status" value="1"/>
</dbReference>
<dbReference type="Pfam" id="PF04545">
    <property type="entry name" value="Sigma70_r4"/>
    <property type="match status" value="1"/>
</dbReference>
<dbReference type="PRINTS" id="PR00046">
    <property type="entry name" value="SIGMA70FCT"/>
</dbReference>
<dbReference type="SUPFAM" id="SSF88946">
    <property type="entry name" value="Sigma2 domain of RNA polymerase sigma factors"/>
    <property type="match status" value="1"/>
</dbReference>
<dbReference type="SUPFAM" id="SSF88659">
    <property type="entry name" value="Sigma3 and sigma4 domains of RNA polymerase sigma factors"/>
    <property type="match status" value="2"/>
</dbReference>
<dbReference type="PROSITE" id="PS00715">
    <property type="entry name" value="SIGMA70_1"/>
    <property type="match status" value="1"/>
</dbReference>
<dbReference type="PROSITE" id="PS00716">
    <property type="entry name" value="SIGMA70_2"/>
    <property type="match status" value="1"/>
</dbReference>